<organism>
    <name type="scientific">Vibrio vulnificus (strain CMCP6)</name>
    <dbReference type="NCBI Taxonomy" id="216895"/>
    <lineage>
        <taxon>Bacteria</taxon>
        <taxon>Pseudomonadati</taxon>
        <taxon>Pseudomonadota</taxon>
        <taxon>Gammaproteobacteria</taxon>
        <taxon>Vibrionales</taxon>
        <taxon>Vibrionaceae</taxon>
        <taxon>Vibrio</taxon>
    </lineage>
</organism>
<protein>
    <recommendedName>
        <fullName evidence="2">N(4)-acetylcytidine amidohydrolase</fullName>
        <shortName evidence="2">ac4C amidohydrolase</shortName>
        <ecNumber evidence="2">3.5.1.135</ecNumber>
    </recommendedName>
</protein>
<feature type="chain" id="PRO_0000214611" description="N(4)-acetylcytidine amidohydrolase">
    <location>
        <begin position="1"/>
        <end position="104"/>
    </location>
</feature>
<feature type="domain" description="ASCH" evidence="1">
    <location>
        <begin position="7"/>
        <end position="93"/>
    </location>
</feature>
<feature type="active site" description="Proton acceptor" evidence="2">
    <location>
        <position position="22"/>
    </location>
</feature>
<feature type="active site" description="Nucleophile" evidence="2">
    <location>
        <position position="25"/>
    </location>
</feature>
<feature type="active site" description="Proton donor" evidence="2">
    <location>
        <position position="75"/>
    </location>
</feature>
<accession>Q8D7V1</accession>
<gene>
    <name type="ordered locus">VV2_0047</name>
</gene>
<proteinExistence type="inferred from homology"/>
<dbReference type="EC" id="3.5.1.135" evidence="2"/>
<dbReference type="EMBL" id="AE016796">
    <property type="protein sequence ID" value="AAO07024.1"/>
    <property type="status" value="ALT_INIT"/>
    <property type="molecule type" value="Genomic_DNA"/>
</dbReference>
<dbReference type="RefSeq" id="WP_043921115.1">
    <property type="nucleotide sequence ID" value="NC_004460.2"/>
</dbReference>
<dbReference type="SMR" id="Q8D7V1"/>
<dbReference type="KEGG" id="vvu:VV2_0047"/>
<dbReference type="HOGENOM" id="CLU_152586_0_0_6"/>
<dbReference type="Proteomes" id="UP000002275">
    <property type="component" value="Chromosome 2"/>
</dbReference>
<dbReference type="GO" id="GO:0005829">
    <property type="term" value="C:cytosol"/>
    <property type="evidence" value="ECO:0007669"/>
    <property type="project" value="TreeGrafter"/>
</dbReference>
<dbReference type="GO" id="GO:0016813">
    <property type="term" value="F:hydrolase activity, acting on carbon-nitrogen (but not peptide) bonds, in linear amidines"/>
    <property type="evidence" value="ECO:0007669"/>
    <property type="project" value="UniProtKB-UniRule"/>
</dbReference>
<dbReference type="GO" id="GO:0106251">
    <property type="term" value="F:N4-acetylcytidine amidohydrolase activity"/>
    <property type="evidence" value="ECO:0007669"/>
    <property type="project" value="RHEA"/>
</dbReference>
<dbReference type="CDD" id="cd06552">
    <property type="entry name" value="ASCH_yqfb_like"/>
    <property type="match status" value="1"/>
</dbReference>
<dbReference type="Gene3D" id="2.30.130.30">
    <property type="entry name" value="Hypothetical protein"/>
    <property type="match status" value="1"/>
</dbReference>
<dbReference type="HAMAP" id="MF_00684">
    <property type="entry name" value="ac4C_amidohydr"/>
    <property type="match status" value="1"/>
</dbReference>
<dbReference type="InterPro" id="IPR008314">
    <property type="entry name" value="AC4CH"/>
</dbReference>
<dbReference type="InterPro" id="IPR007374">
    <property type="entry name" value="ASCH_domain"/>
</dbReference>
<dbReference type="InterPro" id="IPR015947">
    <property type="entry name" value="PUA-like_sf"/>
</dbReference>
<dbReference type="NCBIfam" id="NF003443">
    <property type="entry name" value="PRK04980.1"/>
    <property type="match status" value="1"/>
</dbReference>
<dbReference type="PANTHER" id="PTHR38088">
    <property type="entry name" value="UCP029143 FAMILY PROTEIN"/>
    <property type="match status" value="1"/>
</dbReference>
<dbReference type="PANTHER" id="PTHR38088:SF2">
    <property type="entry name" value="UCP029143 FAMILY PROTEIN"/>
    <property type="match status" value="1"/>
</dbReference>
<dbReference type="Pfam" id="PF04266">
    <property type="entry name" value="ASCH"/>
    <property type="match status" value="1"/>
</dbReference>
<dbReference type="PIRSF" id="PIRSF029143">
    <property type="entry name" value="UCP029143"/>
    <property type="match status" value="1"/>
</dbReference>
<dbReference type="SMART" id="SM01022">
    <property type="entry name" value="ASCH"/>
    <property type="match status" value="1"/>
</dbReference>
<dbReference type="SUPFAM" id="SSF88697">
    <property type="entry name" value="PUA domain-like"/>
    <property type="match status" value="1"/>
</dbReference>
<name>AC4CH_VIBVU</name>
<evidence type="ECO:0000255" key="1"/>
<evidence type="ECO:0000255" key="2">
    <source>
        <dbReference type="HAMAP-Rule" id="MF_00684"/>
    </source>
</evidence>
<evidence type="ECO:0000305" key="3"/>
<comment type="function">
    <text evidence="2">Catalyzes the hydrolysis of N(4)-acetylcytidine (ac4C).</text>
</comment>
<comment type="catalytic activity">
    <reaction evidence="2">
        <text>N(4)-acetylcytidine + H2O = cytidine + acetate + H(+)</text>
        <dbReference type="Rhea" id="RHEA:62932"/>
        <dbReference type="ChEBI" id="CHEBI:15377"/>
        <dbReference type="ChEBI" id="CHEBI:15378"/>
        <dbReference type="ChEBI" id="CHEBI:17562"/>
        <dbReference type="ChEBI" id="CHEBI:30089"/>
        <dbReference type="ChEBI" id="CHEBI:70989"/>
        <dbReference type="EC" id="3.5.1.135"/>
    </reaction>
</comment>
<comment type="catalytic activity">
    <reaction evidence="2">
        <text>N(4)-acetyl-2'-deoxycytidine + H2O = 2'-deoxycytidine + acetate + H(+)</text>
        <dbReference type="Rhea" id="RHEA:62936"/>
        <dbReference type="ChEBI" id="CHEBI:15377"/>
        <dbReference type="ChEBI" id="CHEBI:15378"/>
        <dbReference type="ChEBI" id="CHEBI:15698"/>
        <dbReference type="ChEBI" id="CHEBI:30089"/>
        <dbReference type="ChEBI" id="CHEBI:146133"/>
        <dbReference type="EC" id="3.5.1.135"/>
    </reaction>
</comment>
<comment type="catalytic activity">
    <reaction evidence="2">
        <text>N(4)-acetylcytosine + H2O = cytosine + acetate + H(+)</text>
        <dbReference type="Rhea" id="RHEA:62940"/>
        <dbReference type="ChEBI" id="CHEBI:15377"/>
        <dbReference type="ChEBI" id="CHEBI:15378"/>
        <dbReference type="ChEBI" id="CHEBI:16040"/>
        <dbReference type="ChEBI" id="CHEBI:30089"/>
        <dbReference type="ChEBI" id="CHEBI:146134"/>
        <dbReference type="EC" id="3.5.1.135"/>
    </reaction>
</comment>
<comment type="similarity">
    <text evidence="2">Belongs to the N(4)-acetylcytidine amidohydrolase family.</text>
</comment>
<comment type="sequence caution" evidence="3">
    <conflict type="erroneous initiation">
        <sequence resource="EMBL-CDS" id="AAO07024"/>
    </conflict>
</comment>
<reference key="1">
    <citation type="submission" date="2002-12" db="EMBL/GenBank/DDBJ databases">
        <title>Complete genome sequence of Vibrio vulnificus CMCP6.</title>
        <authorList>
            <person name="Rhee J.H."/>
            <person name="Kim S.Y."/>
            <person name="Chung S.S."/>
            <person name="Kim J.J."/>
            <person name="Moon Y.H."/>
            <person name="Jeong H."/>
            <person name="Choy H.E."/>
        </authorList>
    </citation>
    <scope>NUCLEOTIDE SEQUENCE [LARGE SCALE GENOMIC DNA]</scope>
    <source>
        <strain>CMCP6</strain>
    </source>
</reference>
<sequence>MTAPTKMTFFSRFEADILAGKKTITIRDESEKDYQPGTTVEVSTLEEGRVFCQLKILSVEPIAFSALNEFHAEQENMTLETLKEVIQEIYPGIEQLYVIQYQRV</sequence>
<keyword id="KW-0378">Hydrolase</keyword>